<name>LIVB4_BRUME</name>
<proteinExistence type="inferred from homology"/>
<feature type="signal peptide" evidence="1">
    <location>
        <begin position="1"/>
        <end position="26"/>
    </location>
</feature>
<feature type="chain" id="PRO_0000285739" description="Leu/Ile/Val-binding protein homolog 4">
    <location>
        <begin position="27"/>
        <end position="416"/>
    </location>
</feature>
<accession>Q8YDV4</accession>
<comment type="function">
    <text evidence="2">Component of an amino-acid transport system.</text>
</comment>
<comment type="similarity">
    <text evidence="2">Belongs to the leucine-binding protein family.</text>
</comment>
<comment type="sequence caution" evidence="2">
    <conflict type="erroneous termination">
        <sequence resource="EMBL-CDS" id="AAL53311"/>
    </conflict>
    <text>Truncated C-terminus.</text>
</comment>
<reference key="1">
    <citation type="journal article" date="2002" name="Proc. Natl. Acad. Sci. U.S.A.">
        <title>The genome sequence of the facultative intracellular pathogen Brucella melitensis.</title>
        <authorList>
            <person name="DelVecchio V.G."/>
            <person name="Kapatral V."/>
            <person name="Redkar R.J."/>
            <person name="Patra G."/>
            <person name="Mujer C."/>
            <person name="Los T."/>
            <person name="Ivanova N."/>
            <person name="Anderson I."/>
            <person name="Bhattacharyya A."/>
            <person name="Lykidis A."/>
            <person name="Reznik G."/>
            <person name="Jablonski L."/>
            <person name="Larsen N."/>
            <person name="D'Souza M."/>
            <person name="Bernal A."/>
            <person name="Mazur M."/>
            <person name="Goltsman E."/>
            <person name="Selkov E."/>
            <person name="Elzer P.H."/>
            <person name="Hagius S."/>
            <person name="O'Callaghan D."/>
            <person name="Letesson J.-J."/>
            <person name="Haselkorn R."/>
            <person name="Kyrpides N.C."/>
            <person name="Overbeek R."/>
        </authorList>
    </citation>
    <scope>NUCLEOTIDE SEQUENCE [LARGE SCALE GENOMIC DNA]</scope>
    <source>
        <strain>ATCC 23456 / CCUG 17765 / NCTC 10094 / 16M</strain>
    </source>
</reference>
<dbReference type="EMBL" id="AE008918">
    <property type="protein sequence ID" value="AAL53311.1"/>
    <property type="status" value="ALT_SEQ"/>
    <property type="molecule type" value="Genomic_DNA"/>
</dbReference>
<dbReference type="PIR" id="AD3518">
    <property type="entry name" value="AD3518"/>
</dbReference>
<dbReference type="SMR" id="Q8YDV4"/>
<dbReference type="KEGG" id="bme:BMEII0070"/>
<dbReference type="eggNOG" id="COG0683">
    <property type="taxonomic scope" value="Bacteria"/>
</dbReference>
<dbReference type="Proteomes" id="UP000000419">
    <property type="component" value="Chromosome II"/>
</dbReference>
<dbReference type="GO" id="GO:0006865">
    <property type="term" value="P:amino acid transport"/>
    <property type="evidence" value="ECO:0007669"/>
    <property type="project" value="UniProtKB-KW"/>
</dbReference>
<dbReference type="CDD" id="cd06329">
    <property type="entry name" value="PBP1_SBP-like"/>
    <property type="match status" value="1"/>
</dbReference>
<dbReference type="Gene3D" id="3.40.50.2300">
    <property type="match status" value="2"/>
</dbReference>
<dbReference type="InterPro" id="IPR051010">
    <property type="entry name" value="BCAA_transport"/>
</dbReference>
<dbReference type="InterPro" id="IPR028081">
    <property type="entry name" value="Leu-bd"/>
</dbReference>
<dbReference type="InterPro" id="IPR000709">
    <property type="entry name" value="Leu_Ile_Val-bd"/>
</dbReference>
<dbReference type="InterPro" id="IPR028082">
    <property type="entry name" value="Peripla_BP_I"/>
</dbReference>
<dbReference type="PANTHER" id="PTHR30483">
    <property type="entry name" value="LEUCINE-SPECIFIC-BINDING PROTEIN"/>
    <property type="match status" value="1"/>
</dbReference>
<dbReference type="PANTHER" id="PTHR30483:SF6">
    <property type="entry name" value="PERIPLASMIC BINDING PROTEIN OF ABC TRANSPORTER FOR NATURAL AMINO ACIDS"/>
    <property type="match status" value="1"/>
</dbReference>
<dbReference type="Pfam" id="PF13458">
    <property type="entry name" value="Peripla_BP_6"/>
    <property type="match status" value="1"/>
</dbReference>
<dbReference type="PRINTS" id="PR00337">
    <property type="entry name" value="LEUILEVALBP"/>
</dbReference>
<dbReference type="SUPFAM" id="SSF53822">
    <property type="entry name" value="Periplasmic binding protein-like I"/>
    <property type="match status" value="1"/>
</dbReference>
<gene>
    <name type="ordered locus">BMEII0070</name>
</gene>
<sequence>MSLKVFLQAGVACAALSLAGAAGASAEPLKIALVETLSGPQASTGLLYRAAVLYQLGKINEAGGFNGEKIQILEYDNQGGPVGAADRVKAAIADGAQIIVQGSSSAVAGQITEDVRKYNLRNKGKEVLYLNLGAEALELTGSKCHFYHFRFSPNAAIRFKTVAQGMKDKGILGERAYSINQNYSWGVDVENTVVANAKEIGYEVVDKTLHEVNKIQDFSPYVAKIQAANVDTVFTGNWSNDLLLLMKAASGAGLKAKFATSFLDQPGNIGNAGAIAEGHIVSTPFNPEANGEASMAFAEDYKKVTGHYPSYAEPAAVFGLQLFGEALKNVKPGEGKINTTDIALAIENASVKTPMGDYSMRSDDHQAKFPMVVQEVSKKARIKADGTEYGFLPFKTFTGDESIDPVQESCSMKRPG</sequence>
<organism>
    <name type="scientific">Brucella melitensis biotype 1 (strain ATCC 23456 / CCUG 17765 / NCTC 10094 / 16M)</name>
    <dbReference type="NCBI Taxonomy" id="224914"/>
    <lineage>
        <taxon>Bacteria</taxon>
        <taxon>Pseudomonadati</taxon>
        <taxon>Pseudomonadota</taxon>
        <taxon>Alphaproteobacteria</taxon>
        <taxon>Hyphomicrobiales</taxon>
        <taxon>Brucellaceae</taxon>
        <taxon>Brucella/Ochrobactrum group</taxon>
        <taxon>Brucella</taxon>
    </lineage>
</organism>
<protein>
    <recommendedName>
        <fullName>Leu/Ile/Val-binding protein homolog 4</fullName>
    </recommendedName>
</protein>
<keyword id="KW-0029">Amino-acid transport</keyword>
<keyword id="KW-0732">Signal</keyword>
<keyword id="KW-0813">Transport</keyword>
<evidence type="ECO:0000255" key="1"/>
<evidence type="ECO:0000305" key="2"/>